<accession>Q2K9L2</accession>
<organism>
    <name type="scientific">Rhizobium etli (strain ATCC 51251 / DSM 11541 / JCM 21823 / NBRC 15573 / CFN 42)</name>
    <dbReference type="NCBI Taxonomy" id="347834"/>
    <lineage>
        <taxon>Bacteria</taxon>
        <taxon>Pseudomonadati</taxon>
        <taxon>Pseudomonadota</taxon>
        <taxon>Alphaproteobacteria</taxon>
        <taxon>Hyphomicrobiales</taxon>
        <taxon>Rhizobiaceae</taxon>
        <taxon>Rhizobium/Agrobacterium group</taxon>
        <taxon>Rhizobium</taxon>
    </lineage>
</organism>
<reference key="1">
    <citation type="journal article" date="2006" name="Proc. Natl. Acad. Sci. U.S.A.">
        <title>The partitioned Rhizobium etli genome: genetic and metabolic redundancy in seven interacting replicons.</title>
        <authorList>
            <person name="Gonzalez V."/>
            <person name="Santamaria R.I."/>
            <person name="Bustos P."/>
            <person name="Hernandez-Gonzalez I."/>
            <person name="Medrano-Soto A."/>
            <person name="Moreno-Hagelsieb G."/>
            <person name="Janga S.C."/>
            <person name="Ramirez M.A."/>
            <person name="Jimenez-Jacinto V."/>
            <person name="Collado-Vides J."/>
            <person name="Davila G."/>
        </authorList>
    </citation>
    <scope>NUCLEOTIDE SEQUENCE [LARGE SCALE GENOMIC DNA]</scope>
    <source>
        <strain>ATCC 51251 / DSM 11541 / JCM 21823 / NBRC 15573 / CFN 42</strain>
    </source>
</reference>
<protein>
    <recommendedName>
        <fullName evidence="1">Small ribosomal subunit protein uS19</fullName>
    </recommendedName>
    <alternativeName>
        <fullName evidence="2">30S ribosomal protein S19</fullName>
    </alternativeName>
</protein>
<sequence>MARSVWKGPFVDGYLLKKAEKVREGGRAEVIKIWSRRSTILPQFVGLTFGVYNGSKHIPVSVNEDMVGHKFGEFSPTRTYYGHGADKKAKRK</sequence>
<dbReference type="EMBL" id="CP000133">
    <property type="protein sequence ID" value="ABC90474.1"/>
    <property type="molecule type" value="Genomic_DNA"/>
</dbReference>
<dbReference type="RefSeq" id="WP_003573797.1">
    <property type="nucleotide sequence ID" value="NC_007761.1"/>
</dbReference>
<dbReference type="SMR" id="Q2K9L2"/>
<dbReference type="GeneID" id="91148132"/>
<dbReference type="KEGG" id="ret:RHE_CH01679"/>
<dbReference type="eggNOG" id="COG0185">
    <property type="taxonomic scope" value="Bacteria"/>
</dbReference>
<dbReference type="HOGENOM" id="CLU_144911_0_1_5"/>
<dbReference type="OrthoDB" id="9797833at2"/>
<dbReference type="Proteomes" id="UP000001936">
    <property type="component" value="Chromosome"/>
</dbReference>
<dbReference type="GO" id="GO:0005737">
    <property type="term" value="C:cytoplasm"/>
    <property type="evidence" value="ECO:0007669"/>
    <property type="project" value="UniProtKB-ARBA"/>
</dbReference>
<dbReference type="GO" id="GO:0015935">
    <property type="term" value="C:small ribosomal subunit"/>
    <property type="evidence" value="ECO:0007669"/>
    <property type="project" value="InterPro"/>
</dbReference>
<dbReference type="GO" id="GO:0019843">
    <property type="term" value="F:rRNA binding"/>
    <property type="evidence" value="ECO:0007669"/>
    <property type="project" value="UniProtKB-UniRule"/>
</dbReference>
<dbReference type="GO" id="GO:0003735">
    <property type="term" value="F:structural constituent of ribosome"/>
    <property type="evidence" value="ECO:0007669"/>
    <property type="project" value="InterPro"/>
</dbReference>
<dbReference type="GO" id="GO:0000028">
    <property type="term" value="P:ribosomal small subunit assembly"/>
    <property type="evidence" value="ECO:0007669"/>
    <property type="project" value="TreeGrafter"/>
</dbReference>
<dbReference type="GO" id="GO:0006412">
    <property type="term" value="P:translation"/>
    <property type="evidence" value="ECO:0007669"/>
    <property type="project" value="UniProtKB-UniRule"/>
</dbReference>
<dbReference type="FunFam" id="3.30.860.10:FF:000001">
    <property type="entry name" value="30S ribosomal protein S19"/>
    <property type="match status" value="1"/>
</dbReference>
<dbReference type="Gene3D" id="3.30.860.10">
    <property type="entry name" value="30s Ribosomal Protein S19, Chain A"/>
    <property type="match status" value="1"/>
</dbReference>
<dbReference type="HAMAP" id="MF_00531">
    <property type="entry name" value="Ribosomal_uS19"/>
    <property type="match status" value="1"/>
</dbReference>
<dbReference type="InterPro" id="IPR002222">
    <property type="entry name" value="Ribosomal_uS19"/>
</dbReference>
<dbReference type="InterPro" id="IPR005732">
    <property type="entry name" value="Ribosomal_uS19_bac-type"/>
</dbReference>
<dbReference type="InterPro" id="IPR020934">
    <property type="entry name" value="Ribosomal_uS19_CS"/>
</dbReference>
<dbReference type="InterPro" id="IPR023575">
    <property type="entry name" value="Ribosomal_uS19_SF"/>
</dbReference>
<dbReference type="NCBIfam" id="TIGR01050">
    <property type="entry name" value="rpsS_bact"/>
    <property type="match status" value="1"/>
</dbReference>
<dbReference type="PANTHER" id="PTHR11880">
    <property type="entry name" value="RIBOSOMAL PROTEIN S19P FAMILY MEMBER"/>
    <property type="match status" value="1"/>
</dbReference>
<dbReference type="PANTHER" id="PTHR11880:SF8">
    <property type="entry name" value="SMALL RIBOSOMAL SUBUNIT PROTEIN US19M"/>
    <property type="match status" value="1"/>
</dbReference>
<dbReference type="Pfam" id="PF00203">
    <property type="entry name" value="Ribosomal_S19"/>
    <property type="match status" value="1"/>
</dbReference>
<dbReference type="PIRSF" id="PIRSF002144">
    <property type="entry name" value="Ribosomal_S19"/>
    <property type="match status" value="1"/>
</dbReference>
<dbReference type="PRINTS" id="PR00975">
    <property type="entry name" value="RIBOSOMALS19"/>
</dbReference>
<dbReference type="SUPFAM" id="SSF54570">
    <property type="entry name" value="Ribosomal protein S19"/>
    <property type="match status" value="1"/>
</dbReference>
<dbReference type="PROSITE" id="PS00323">
    <property type="entry name" value="RIBOSOMAL_S19"/>
    <property type="match status" value="1"/>
</dbReference>
<proteinExistence type="inferred from homology"/>
<keyword id="KW-1185">Reference proteome</keyword>
<keyword id="KW-0687">Ribonucleoprotein</keyword>
<keyword id="KW-0689">Ribosomal protein</keyword>
<keyword id="KW-0694">RNA-binding</keyword>
<keyword id="KW-0699">rRNA-binding</keyword>
<gene>
    <name evidence="1" type="primary">rpsS</name>
    <name type="ordered locus">RHE_CH01679</name>
</gene>
<evidence type="ECO:0000255" key="1">
    <source>
        <dbReference type="HAMAP-Rule" id="MF_00531"/>
    </source>
</evidence>
<evidence type="ECO:0000305" key="2"/>
<feature type="chain" id="PRO_0000265410" description="Small ribosomal subunit protein uS19">
    <location>
        <begin position="1"/>
        <end position="92"/>
    </location>
</feature>
<name>RS19_RHIEC</name>
<comment type="function">
    <text evidence="1">Protein S19 forms a complex with S13 that binds strongly to the 16S ribosomal RNA.</text>
</comment>
<comment type="similarity">
    <text evidence="1">Belongs to the universal ribosomal protein uS19 family.</text>
</comment>